<reference key="1">
    <citation type="submission" date="2006-08" db="EMBL/GenBank/DDBJ databases">
        <title>Complete sequence of chromosome 1 of Shewanella sp. MR-7.</title>
        <authorList>
            <person name="Copeland A."/>
            <person name="Lucas S."/>
            <person name="Lapidus A."/>
            <person name="Barry K."/>
            <person name="Detter J.C."/>
            <person name="Glavina del Rio T."/>
            <person name="Hammon N."/>
            <person name="Israni S."/>
            <person name="Dalin E."/>
            <person name="Tice H."/>
            <person name="Pitluck S."/>
            <person name="Kiss H."/>
            <person name="Brettin T."/>
            <person name="Bruce D."/>
            <person name="Han C."/>
            <person name="Tapia R."/>
            <person name="Gilna P."/>
            <person name="Schmutz J."/>
            <person name="Larimer F."/>
            <person name="Land M."/>
            <person name="Hauser L."/>
            <person name="Kyrpides N."/>
            <person name="Mikhailova N."/>
            <person name="Nealson K."/>
            <person name="Konstantinidis K."/>
            <person name="Klappenbach J."/>
            <person name="Tiedje J."/>
            <person name="Richardson P."/>
        </authorList>
    </citation>
    <scope>NUCLEOTIDE SEQUENCE [LARGE SCALE GENOMIC DNA]</scope>
    <source>
        <strain>MR-7</strain>
    </source>
</reference>
<gene>
    <name evidence="1" type="primary">aat</name>
    <name type="ordered locus">Shewmr7_1726</name>
</gene>
<dbReference type="EC" id="2.3.2.6" evidence="1"/>
<dbReference type="EMBL" id="CP000444">
    <property type="protein sequence ID" value="ABI42719.1"/>
    <property type="molecule type" value="Genomic_DNA"/>
</dbReference>
<dbReference type="SMR" id="Q0HVY6"/>
<dbReference type="KEGG" id="shm:Shewmr7_1726"/>
<dbReference type="HOGENOM" id="CLU_075045_0_0_6"/>
<dbReference type="GO" id="GO:0005737">
    <property type="term" value="C:cytoplasm"/>
    <property type="evidence" value="ECO:0007669"/>
    <property type="project" value="UniProtKB-SubCell"/>
</dbReference>
<dbReference type="GO" id="GO:0008914">
    <property type="term" value="F:leucyl-tRNA--protein transferase activity"/>
    <property type="evidence" value="ECO:0007669"/>
    <property type="project" value="UniProtKB-UniRule"/>
</dbReference>
<dbReference type="GO" id="GO:0030163">
    <property type="term" value="P:protein catabolic process"/>
    <property type="evidence" value="ECO:0007669"/>
    <property type="project" value="UniProtKB-UniRule"/>
</dbReference>
<dbReference type="FunFam" id="3.30.70.3550:FF:000001">
    <property type="entry name" value="Leucyl/phenylalanyl-tRNA--protein transferase"/>
    <property type="match status" value="1"/>
</dbReference>
<dbReference type="FunFam" id="3.40.630.70:FF:000007">
    <property type="entry name" value="Leucyl/phenylalanyl-tRNA--protein transferase"/>
    <property type="match status" value="1"/>
</dbReference>
<dbReference type="Gene3D" id="3.40.630.70">
    <property type="entry name" value="Leucyl/phenylalanyl-tRNA-protein transferase, C-terminal domain"/>
    <property type="match status" value="1"/>
</dbReference>
<dbReference type="Gene3D" id="3.30.70.3550">
    <property type="entry name" value="Leucyl/phenylalanyl-tRNA-protein transferase, N-terminal domain"/>
    <property type="match status" value="1"/>
</dbReference>
<dbReference type="HAMAP" id="MF_00688">
    <property type="entry name" value="Leu_Phe_trans"/>
    <property type="match status" value="1"/>
</dbReference>
<dbReference type="InterPro" id="IPR016181">
    <property type="entry name" value="Acyl_CoA_acyltransferase"/>
</dbReference>
<dbReference type="InterPro" id="IPR004616">
    <property type="entry name" value="Leu/Phe-tRNA_Trfase"/>
</dbReference>
<dbReference type="InterPro" id="IPR042203">
    <property type="entry name" value="Leu/Phe-tRNA_Trfase_C"/>
</dbReference>
<dbReference type="InterPro" id="IPR042221">
    <property type="entry name" value="Leu/Phe-tRNA_Trfase_N"/>
</dbReference>
<dbReference type="NCBIfam" id="TIGR00667">
    <property type="entry name" value="aat"/>
    <property type="match status" value="1"/>
</dbReference>
<dbReference type="PANTHER" id="PTHR30098">
    <property type="entry name" value="LEUCYL/PHENYLALANYL-TRNA--PROTEIN TRANSFERASE"/>
    <property type="match status" value="1"/>
</dbReference>
<dbReference type="PANTHER" id="PTHR30098:SF2">
    <property type="entry name" value="LEUCYL_PHENYLALANYL-TRNA--PROTEIN TRANSFERASE"/>
    <property type="match status" value="1"/>
</dbReference>
<dbReference type="Pfam" id="PF03588">
    <property type="entry name" value="Leu_Phe_trans"/>
    <property type="match status" value="1"/>
</dbReference>
<dbReference type="SUPFAM" id="SSF55729">
    <property type="entry name" value="Acyl-CoA N-acyltransferases (Nat)"/>
    <property type="match status" value="1"/>
</dbReference>
<protein>
    <recommendedName>
        <fullName evidence="1">Leucyl/phenylalanyl-tRNA--protein transferase</fullName>
        <ecNumber evidence="1">2.3.2.6</ecNumber>
    </recommendedName>
    <alternativeName>
        <fullName evidence="1">L/F-transferase</fullName>
    </alternativeName>
    <alternativeName>
        <fullName evidence="1">Leucyltransferase</fullName>
    </alternativeName>
    <alternativeName>
        <fullName evidence="1">Phenyalanyltransferase</fullName>
    </alternativeName>
</protein>
<comment type="function">
    <text evidence="1">Functions in the N-end rule pathway of protein degradation where it conjugates Leu, Phe and, less efficiently, Met from aminoacyl-tRNAs to the N-termini of proteins containing an N-terminal arginine or lysine.</text>
</comment>
<comment type="catalytic activity">
    <reaction evidence="1">
        <text>N-terminal L-lysyl-[protein] + L-leucyl-tRNA(Leu) = N-terminal L-leucyl-L-lysyl-[protein] + tRNA(Leu) + H(+)</text>
        <dbReference type="Rhea" id="RHEA:12340"/>
        <dbReference type="Rhea" id="RHEA-COMP:9613"/>
        <dbReference type="Rhea" id="RHEA-COMP:9622"/>
        <dbReference type="Rhea" id="RHEA-COMP:12670"/>
        <dbReference type="Rhea" id="RHEA-COMP:12671"/>
        <dbReference type="ChEBI" id="CHEBI:15378"/>
        <dbReference type="ChEBI" id="CHEBI:65249"/>
        <dbReference type="ChEBI" id="CHEBI:78442"/>
        <dbReference type="ChEBI" id="CHEBI:78494"/>
        <dbReference type="ChEBI" id="CHEBI:133043"/>
        <dbReference type="EC" id="2.3.2.6"/>
    </reaction>
</comment>
<comment type="catalytic activity">
    <reaction evidence="1">
        <text>N-terminal L-arginyl-[protein] + L-leucyl-tRNA(Leu) = N-terminal L-leucyl-L-arginyl-[protein] + tRNA(Leu) + H(+)</text>
        <dbReference type="Rhea" id="RHEA:50416"/>
        <dbReference type="Rhea" id="RHEA-COMP:9613"/>
        <dbReference type="Rhea" id="RHEA-COMP:9622"/>
        <dbReference type="Rhea" id="RHEA-COMP:12672"/>
        <dbReference type="Rhea" id="RHEA-COMP:12673"/>
        <dbReference type="ChEBI" id="CHEBI:15378"/>
        <dbReference type="ChEBI" id="CHEBI:64719"/>
        <dbReference type="ChEBI" id="CHEBI:78442"/>
        <dbReference type="ChEBI" id="CHEBI:78494"/>
        <dbReference type="ChEBI" id="CHEBI:133044"/>
        <dbReference type="EC" id="2.3.2.6"/>
    </reaction>
</comment>
<comment type="catalytic activity">
    <reaction evidence="1">
        <text>L-phenylalanyl-tRNA(Phe) + an N-terminal L-alpha-aminoacyl-[protein] = an N-terminal L-phenylalanyl-L-alpha-aminoacyl-[protein] + tRNA(Phe)</text>
        <dbReference type="Rhea" id="RHEA:43632"/>
        <dbReference type="Rhea" id="RHEA-COMP:9668"/>
        <dbReference type="Rhea" id="RHEA-COMP:9699"/>
        <dbReference type="Rhea" id="RHEA-COMP:10636"/>
        <dbReference type="Rhea" id="RHEA-COMP:10637"/>
        <dbReference type="ChEBI" id="CHEBI:78442"/>
        <dbReference type="ChEBI" id="CHEBI:78531"/>
        <dbReference type="ChEBI" id="CHEBI:78597"/>
        <dbReference type="ChEBI" id="CHEBI:83561"/>
        <dbReference type="EC" id="2.3.2.6"/>
    </reaction>
</comment>
<comment type="subcellular location">
    <subcellularLocation>
        <location evidence="1">Cytoplasm</location>
    </subcellularLocation>
</comment>
<comment type="similarity">
    <text evidence="1">Belongs to the L/F-transferase family.</text>
</comment>
<feature type="chain" id="PRO_0000304361" description="Leucyl/phenylalanyl-tRNA--protein transferase">
    <location>
        <begin position="1"/>
        <end position="236"/>
    </location>
</feature>
<sequence length="236" mass="26801">MNSLSFLNHEFEAFPSPELALTDPNGLLAIGGDLRPERLLTAYYHGIFPWFNADDPILWWSPDPRAIFIPGQVNISTSLRKYLKKQPWHFTINHAFTDVMAGCAQPRRKQAGTWITHEIQMAYRELHHNGHAHSVEVWHGERLIGGLYGLAIGQVFCGESMFHRETNASKAAMLLLQQHLINMDFKLIDAQVMNPHLESLGAKPVKRANFIQLLTQFRDNTANPAAWIPSEVTLEL</sequence>
<proteinExistence type="inferred from homology"/>
<accession>Q0HVY6</accession>
<name>LFTR_SHESR</name>
<evidence type="ECO:0000255" key="1">
    <source>
        <dbReference type="HAMAP-Rule" id="MF_00688"/>
    </source>
</evidence>
<keyword id="KW-0012">Acyltransferase</keyword>
<keyword id="KW-0963">Cytoplasm</keyword>
<keyword id="KW-0808">Transferase</keyword>
<organism>
    <name type="scientific">Shewanella sp. (strain MR-7)</name>
    <dbReference type="NCBI Taxonomy" id="60481"/>
    <lineage>
        <taxon>Bacteria</taxon>
        <taxon>Pseudomonadati</taxon>
        <taxon>Pseudomonadota</taxon>
        <taxon>Gammaproteobacteria</taxon>
        <taxon>Alteromonadales</taxon>
        <taxon>Shewanellaceae</taxon>
        <taxon>Shewanella</taxon>
    </lineage>
</organism>